<organism>
    <name type="scientific">Arabidopsis thaliana</name>
    <name type="common">Mouse-ear cress</name>
    <dbReference type="NCBI Taxonomy" id="3702"/>
    <lineage>
        <taxon>Eukaryota</taxon>
        <taxon>Viridiplantae</taxon>
        <taxon>Streptophyta</taxon>
        <taxon>Embryophyta</taxon>
        <taxon>Tracheophyta</taxon>
        <taxon>Spermatophyta</taxon>
        <taxon>Magnoliopsida</taxon>
        <taxon>eudicotyledons</taxon>
        <taxon>Gunneridae</taxon>
        <taxon>Pentapetalae</taxon>
        <taxon>rosids</taxon>
        <taxon>malvids</taxon>
        <taxon>Brassicales</taxon>
        <taxon>Brassicaceae</taxon>
        <taxon>Camelineae</taxon>
        <taxon>Arabidopsis</taxon>
    </lineage>
</organism>
<protein>
    <recommendedName>
        <fullName evidence="3">ACT domain-containing protein ACR9</fullName>
    </recommendedName>
    <alternativeName>
        <fullName evidence="2">Protein ACT DOMAIN REPEATS 9</fullName>
    </alternativeName>
</protein>
<reference key="1">
    <citation type="journal article" date="2011" name="BMC Plant Biol.">
        <title>The ACR11 encodes a novel type of chloroplastic ACT domain repeat protein that is coordinately expressed with GLN2 in Arabidopsis.</title>
        <authorList>
            <person name="Sung T.Y."/>
            <person name="Chung T.Y."/>
            <person name="Hsu C.P."/>
            <person name="Hsieh M.H."/>
        </authorList>
    </citation>
    <scope>NUCLEOTIDE SEQUENCE [MRNA]</scope>
    <scope>FUNCTION</scope>
</reference>
<reference key="2">
    <citation type="journal article" date="1999" name="Nature">
        <title>Sequence and analysis of chromosome 2 of the plant Arabidopsis thaliana.</title>
        <authorList>
            <person name="Lin X."/>
            <person name="Kaul S."/>
            <person name="Rounsley S.D."/>
            <person name="Shea T.P."/>
            <person name="Benito M.-I."/>
            <person name="Town C.D."/>
            <person name="Fujii C.Y."/>
            <person name="Mason T.M."/>
            <person name="Bowman C.L."/>
            <person name="Barnstead M.E."/>
            <person name="Feldblyum T.V."/>
            <person name="Buell C.R."/>
            <person name="Ketchum K.A."/>
            <person name="Lee J.J."/>
            <person name="Ronning C.M."/>
            <person name="Koo H.L."/>
            <person name="Moffat K.S."/>
            <person name="Cronin L.A."/>
            <person name="Shen M."/>
            <person name="Pai G."/>
            <person name="Van Aken S."/>
            <person name="Umayam L."/>
            <person name="Tallon L.J."/>
            <person name="Gill J.E."/>
            <person name="Adams M.D."/>
            <person name="Carrera A.J."/>
            <person name="Creasy T.H."/>
            <person name="Goodman H.M."/>
            <person name="Somerville C.R."/>
            <person name="Copenhaver G.P."/>
            <person name="Preuss D."/>
            <person name="Nierman W.C."/>
            <person name="White O."/>
            <person name="Eisen J.A."/>
            <person name="Salzberg S.L."/>
            <person name="Fraser C.M."/>
            <person name="Venter J.C."/>
        </authorList>
    </citation>
    <scope>NUCLEOTIDE SEQUENCE [LARGE SCALE GENOMIC DNA]</scope>
    <source>
        <strain>cv. Columbia</strain>
    </source>
</reference>
<reference key="3">
    <citation type="journal article" date="2017" name="Plant J.">
        <title>Araport11: a complete reannotation of the Arabidopsis thaliana reference genome.</title>
        <authorList>
            <person name="Cheng C.Y."/>
            <person name="Krishnakumar V."/>
            <person name="Chan A.P."/>
            <person name="Thibaud-Nissen F."/>
            <person name="Schobel S."/>
            <person name="Town C.D."/>
        </authorList>
    </citation>
    <scope>GENOME REANNOTATION</scope>
    <source>
        <strain>cv. Columbia</strain>
    </source>
</reference>
<reference key="4">
    <citation type="journal article" date="2003" name="Science">
        <title>Empirical analysis of transcriptional activity in the Arabidopsis genome.</title>
        <authorList>
            <person name="Yamada K."/>
            <person name="Lim J."/>
            <person name="Dale J.M."/>
            <person name="Chen H."/>
            <person name="Shinn P."/>
            <person name="Palm C.J."/>
            <person name="Southwick A.M."/>
            <person name="Wu H.C."/>
            <person name="Kim C.J."/>
            <person name="Nguyen M."/>
            <person name="Pham P.K."/>
            <person name="Cheuk R.F."/>
            <person name="Karlin-Newmann G."/>
            <person name="Liu S.X."/>
            <person name="Lam B."/>
            <person name="Sakano H."/>
            <person name="Wu T."/>
            <person name="Yu G."/>
            <person name="Miranda M."/>
            <person name="Quach H.L."/>
            <person name="Tripp M."/>
            <person name="Chang C.H."/>
            <person name="Lee J.M."/>
            <person name="Toriumi M.J."/>
            <person name="Chan M.M."/>
            <person name="Tang C.C."/>
            <person name="Onodera C.S."/>
            <person name="Deng J.M."/>
            <person name="Akiyama K."/>
            <person name="Ansari Y."/>
            <person name="Arakawa T."/>
            <person name="Banh J."/>
            <person name="Banno F."/>
            <person name="Bowser L."/>
            <person name="Brooks S.Y."/>
            <person name="Carninci P."/>
            <person name="Chao Q."/>
            <person name="Choy N."/>
            <person name="Enju A."/>
            <person name="Goldsmith A.D."/>
            <person name="Gurjal M."/>
            <person name="Hansen N.F."/>
            <person name="Hayashizaki Y."/>
            <person name="Johnson-Hopson C."/>
            <person name="Hsuan V.W."/>
            <person name="Iida K."/>
            <person name="Karnes M."/>
            <person name="Khan S."/>
            <person name="Koesema E."/>
            <person name="Ishida J."/>
            <person name="Jiang P.X."/>
            <person name="Jones T."/>
            <person name="Kawai J."/>
            <person name="Kamiya A."/>
            <person name="Meyers C."/>
            <person name="Nakajima M."/>
            <person name="Narusaka M."/>
            <person name="Seki M."/>
            <person name="Sakurai T."/>
            <person name="Satou M."/>
            <person name="Tamse R."/>
            <person name="Vaysberg M."/>
            <person name="Wallender E.K."/>
            <person name="Wong C."/>
            <person name="Yamamura Y."/>
            <person name="Yuan S."/>
            <person name="Shinozaki K."/>
            <person name="Davis R.W."/>
            <person name="Theologis A."/>
            <person name="Ecker J.R."/>
        </authorList>
    </citation>
    <scope>NUCLEOTIDE SEQUENCE [LARGE SCALE MRNA]</scope>
    <source>
        <strain>cv. Columbia</strain>
    </source>
</reference>
<comment type="function">
    <text evidence="2">May bind amino acids.</text>
</comment>
<dbReference type="EMBL" id="JF797174">
    <property type="protein sequence ID" value="AEP31950.1"/>
    <property type="molecule type" value="mRNA"/>
</dbReference>
<dbReference type="EMBL" id="AC004218">
    <property type="protein sequence ID" value="AAC27848.1"/>
    <property type="molecule type" value="Genomic_DNA"/>
</dbReference>
<dbReference type="EMBL" id="CP002685">
    <property type="protein sequence ID" value="AEC09695.1"/>
    <property type="molecule type" value="Genomic_DNA"/>
</dbReference>
<dbReference type="EMBL" id="AY045670">
    <property type="protein sequence ID" value="AAK74028.1"/>
    <property type="molecule type" value="mRNA"/>
</dbReference>
<dbReference type="EMBL" id="BT000589">
    <property type="protein sequence ID" value="AAN18158.1"/>
    <property type="molecule type" value="mRNA"/>
</dbReference>
<dbReference type="PIR" id="T00567">
    <property type="entry name" value="T00567"/>
</dbReference>
<dbReference type="RefSeq" id="NP_565908.1">
    <property type="nucleotide sequence ID" value="NM_129515.4"/>
</dbReference>
<dbReference type="SMR" id="O80644"/>
<dbReference type="FunCoup" id="O80644">
    <property type="interactions" value="332"/>
</dbReference>
<dbReference type="STRING" id="3702.O80644"/>
<dbReference type="PaxDb" id="3702-AT2G39570.1"/>
<dbReference type="ProteomicsDB" id="244777"/>
<dbReference type="EnsemblPlants" id="AT2G39570.1">
    <property type="protein sequence ID" value="AT2G39570.1"/>
    <property type="gene ID" value="AT2G39570"/>
</dbReference>
<dbReference type="GeneID" id="818542"/>
<dbReference type="Gramene" id="AT2G39570.1">
    <property type="protein sequence ID" value="AT2G39570.1"/>
    <property type="gene ID" value="AT2G39570"/>
</dbReference>
<dbReference type="KEGG" id="ath:AT2G39570"/>
<dbReference type="Araport" id="AT2G39570"/>
<dbReference type="TAIR" id="AT2G39570">
    <property type="gene designation" value="ACR9"/>
</dbReference>
<dbReference type="eggNOG" id="ENOG502QR3Y">
    <property type="taxonomic scope" value="Eukaryota"/>
</dbReference>
<dbReference type="HOGENOM" id="CLU_050600_0_0_1"/>
<dbReference type="InParanoid" id="O80644"/>
<dbReference type="OMA" id="PEYGHLQ"/>
<dbReference type="PhylomeDB" id="O80644"/>
<dbReference type="PRO" id="PR:O80644"/>
<dbReference type="Proteomes" id="UP000006548">
    <property type="component" value="Chromosome 2"/>
</dbReference>
<dbReference type="ExpressionAtlas" id="O80644">
    <property type="expression patterns" value="baseline and differential"/>
</dbReference>
<dbReference type="CDD" id="cd04894">
    <property type="entry name" value="ACT_ACR-like_1"/>
    <property type="match status" value="1"/>
</dbReference>
<dbReference type="CDD" id="cd04927">
    <property type="entry name" value="ACT_ACR-like_2"/>
    <property type="match status" value="1"/>
</dbReference>
<dbReference type="CDD" id="cd04896">
    <property type="entry name" value="ACT_ACR-like_3"/>
    <property type="match status" value="1"/>
</dbReference>
<dbReference type="CDD" id="cd04898">
    <property type="entry name" value="ACT_ACR-like_4"/>
    <property type="match status" value="1"/>
</dbReference>
<dbReference type="Gene3D" id="3.30.70.260">
    <property type="match status" value="1"/>
</dbReference>
<dbReference type="InterPro" id="IPR040217">
    <property type="entry name" value="ACR1-12"/>
</dbReference>
<dbReference type="InterPro" id="IPR056816">
    <property type="entry name" value="ACR2/9/10_N"/>
</dbReference>
<dbReference type="InterPro" id="IPR045865">
    <property type="entry name" value="ACT-like_dom_sf"/>
</dbReference>
<dbReference type="InterPro" id="IPR056805">
    <property type="entry name" value="ACT_ACR9/10_C"/>
</dbReference>
<dbReference type="InterPro" id="IPR002912">
    <property type="entry name" value="ACT_dom"/>
</dbReference>
<dbReference type="PANTHER" id="PTHR31096">
    <property type="entry name" value="ACT DOMAIN-CONTAINING PROTEIN ACR4-RELATED"/>
    <property type="match status" value="1"/>
</dbReference>
<dbReference type="PANTHER" id="PTHR31096:SF65">
    <property type="entry name" value="ACT DOMAIN-CONTAINING PROTEIN ACR9"/>
    <property type="match status" value="1"/>
</dbReference>
<dbReference type="Pfam" id="PF24914">
    <property type="entry name" value="ACR10_N"/>
    <property type="match status" value="1"/>
</dbReference>
<dbReference type="Pfam" id="PF01842">
    <property type="entry name" value="ACT"/>
    <property type="match status" value="1"/>
</dbReference>
<dbReference type="Pfam" id="PF24931">
    <property type="entry name" value="ACT_ACR9_3rd"/>
    <property type="match status" value="1"/>
</dbReference>
<dbReference type="Pfam" id="PF24926">
    <property type="entry name" value="ACT_ACR9_C"/>
    <property type="match status" value="1"/>
</dbReference>
<dbReference type="SUPFAM" id="SSF55021">
    <property type="entry name" value="ACT-like"/>
    <property type="match status" value="2"/>
</dbReference>
<dbReference type="PROSITE" id="PS51671">
    <property type="entry name" value="ACT"/>
    <property type="match status" value="3"/>
</dbReference>
<name>ACR9_ARATH</name>
<sequence>MGILNDDAVLIEPGKISGDPTVVTVNCPDESGLGSTLCRIILEFGLSITRADFSTDGRWCYIVFWVTPDISSPKIDWDSLKNRLLSACPSCLGSFYFCLQSNVSKPPSLYLLKFFCRDRKGLLHDVTKVLTELEFTIQRVKVMTTPDGRVLDMFFITDAMDLLHTKQRQTKTCDHLTAVLGEHGVSCELELAGPELESVQRFSSLPPLAADELFGPDGFDISGSSSNKAVLTVDNQLSPAHTLLQIRCVDQKGLFYDILRTSKDCDVHIAYGRFSSKVKGYRNLELFVRGTDGNKIMDPKHQANFCARLKEEMVCPLRVIIVNRGPDTELLVANPVELSGKGRPRVFYDVTLALKSLGICIFSAEIGRHSTLDRQWEVYRFLLDESREFPLASLRARNQVVDRVTKTLMGW</sequence>
<gene>
    <name evidence="2" type="primary">ACR9</name>
    <name evidence="5" type="ordered locus">At2g39570</name>
</gene>
<accession>O80644</accession>
<accession>Q94AW0</accession>
<evidence type="ECO:0000255" key="1">
    <source>
        <dbReference type="PROSITE-ProRule" id="PRU01007"/>
    </source>
</evidence>
<evidence type="ECO:0000303" key="2">
    <source>
    </source>
</evidence>
<evidence type="ECO:0000305" key="3"/>
<evidence type="ECO:0000305" key="4">
    <source>
    </source>
</evidence>
<evidence type="ECO:0000312" key="5">
    <source>
        <dbReference type="Araport" id="AT2G39570"/>
    </source>
</evidence>
<keyword id="KW-1185">Reference proteome</keyword>
<keyword id="KW-0677">Repeat</keyword>
<feature type="chain" id="PRO_0000431463" description="ACT domain-containing protein ACR9">
    <location>
        <begin position="1"/>
        <end position="411"/>
    </location>
</feature>
<feature type="domain" description="ACT 1" evidence="1">
    <location>
        <begin position="22"/>
        <end position="105"/>
    </location>
</feature>
<feature type="domain" description="ACT 2" evidence="1">
    <location>
        <begin position="111"/>
        <end position="194"/>
    </location>
</feature>
<feature type="domain" description="ACT 3" evidence="4">
    <location>
        <begin position="243"/>
        <end position="322"/>
    </location>
</feature>
<feature type="sequence conflict" description="In Ref. 4; AAK74028/AAN18158." evidence="3" ref="4">
    <original>G</original>
    <variation>E</variation>
    <location>
        <position position="293"/>
    </location>
</feature>
<proteinExistence type="evidence at transcript level"/>